<gene>
    <name type="primary">EC1.2</name>
    <name type="ordered locus">At2g21740</name>
    <name type="ORF">F7D8.6</name>
</gene>
<name>EC12_ARATH</name>
<sequence>MASNTSFLFATIAILLVLNISGRTLPETEDSTNIAARLNGGGLMECWNALYELKSCTNEIVLFFLNGETKLGVDCCQAVEVITTDCWPAMLTSLGFTSDETNVLRGFCQSPNSGGSSPAPSSVKL</sequence>
<comment type="function">
    <text evidence="2">Involved in the regulation of gamete interactions during the double fertilization and to prevent multiple-pollen tube attraction; mediates the redistribution of the gamete fusogen HAP2/GCS1 to the cell surface after secretion upon sperm arrival.</text>
</comment>
<comment type="subcellular location">
    <subcellularLocation>
        <location evidence="2">Cytoplasmic vesicle</location>
    </subcellularLocation>
    <subcellularLocation>
        <location evidence="2">Secreted</location>
    </subcellularLocation>
    <text>Secreted via vesicle exocytose upon sperm arrival, especially in the apical region of the degenerating synergid cell.</text>
</comment>
<comment type="tissue specificity">
    <text evidence="2">Restricted to female reproductive tissues, specifically accumulating in storage vesicles of the unfertilized egg cell.</text>
</comment>
<comment type="developmental stage">
    <text evidence="2">Confined to the egg cell before fertilization, but disappears upon gamete fusion. Also present in zygotes and early embryos.</text>
</comment>
<comment type="similarity">
    <text evidence="3">Belongs to the plant egg cell-secreted peptide family.</text>
</comment>
<comment type="sequence caution" evidence="3">
    <conflict type="erroneous termination">
        <sequence resource="EMBL-CDS" id="ABK28194"/>
    </conflict>
    <text>Extended C-terminus.</text>
</comment>
<proteinExistence type="evidence at transcript level"/>
<evidence type="ECO:0000255" key="1"/>
<evidence type="ECO:0000269" key="2">
    <source>
    </source>
</evidence>
<evidence type="ECO:0000305" key="3"/>
<accession>Q9SJ24</accession>
<accession>A0MEN9</accession>
<organism>
    <name type="scientific">Arabidopsis thaliana</name>
    <name type="common">Mouse-ear cress</name>
    <dbReference type="NCBI Taxonomy" id="3702"/>
    <lineage>
        <taxon>Eukaryota</taxon>
        <taxon>Viridiplantae</taxon>
        <taxon>Streptophyta</taxon>
        <taxon>Embryophyta</taxon>
        <taxon>Tracheophyta</taxon>
        <taxon>Spermatophyta</taxon>
        <taxon>Magnoliopsida</taxon>
        <taxon>eudicotyledons</taxon>
        <taxon>Gunneridae</taxon>
        <taxon>Pentapetalae</taxon>
        <taxon>rosids</taxon>
        <taxon>malvids</taxon>
        <taxon>Brassicales</taxon>
        <taxon>Brassicaceae</taxon>
        <taxon>Camelineae</taxon>
        <taxon>Arabidopsis</taxon>
    </lineage>
</organism>
<reference key="1">
    <citation type="journal article" date="1999" name="Nature">
        <title>Sequence and analysis of chromosome 2 of the plant Arabidopsis thaliana.</title>
        <authorList>
            <person name="Lin X."/>
            <person name="Kaul S."/>
            <person name="Rounsley S.D."/>
            <person name="Shea T.P."/>
            <person name="Benito M.-I."/>
            <person name="Town C.D."/>
            <person name="Fujii C.Y."/>
            <person name="Mason T.M."/>
            <person name="Bowman C.L."/>
            <person name="Barnstead M.E."/>
            <person name="Feldblyum T.V."/>
            <person name="Buell C.R."/>
            <person name="Ketchum K.A."/>
            <person name="Lee J.J."/>
            <person name="Ronning C.M."/>
            <person name="Koo H.L."/>
            <person name="Moffat K.S."/>
            <person name="Cronin L.A."/>
            <person name="Shen M."/>
            <person name="Pai G."/>
            <person name="Van Aken S."/>
            <person name="Umayam L."/>
            <person name="Tallon L.J."/>
            <person name="Gill J.E."/>
            <person name="Adams M.D."/>
            <person name="Carrera A.J."/>
            <person name="Creasy T.H."/>
            <person name="Goodman H.M."/>
            <person name="Somerville C.R."/>
            <person name="Copenhaver G.P."/>
            <person name="Preuss D."/>
            <person name="Nierman W.C."/>
            <person name="White O."/>
            <person name="Eisen J.A."/>
            <person name="Salzberg S.L."/>
            <person name="Fraser C.M."/>
            <person name="Venter J.C."/>
        </authorList>
    </citation>
    <scope>NUCLEOTIDE SEQUENCE [LARGE SCALE GENOMIC DNA]</scope>
    <source>
        <strain>cv. Columbia</strain>
    </source>
</reference>
<reference key="2">
    <citation type="journal article" date="2017" name="Plant J.">
        <title>Araport11: a complete reannotation of the Arabidopsis thaliana reference genome.</title>
        <authorList>
            <person name="Cheng C.Y."/>
            <person name="Krishnakumar V."/>
            <person name="Chan A.P."/>
            <person name="Thibaud-Nissen F."/>
            <person name="Schobel S."/>
            <person name="Town C.D."/>
        </authorList>
    </citation>
    <scope>GENOME REANNOTATION</scope>
    <source>
        <strain>cv. Columbia</strain>
    </source>
</reference>
<reference key="3">
    <citation type="journal article" date="2006" name="Plant Biotechnol. J.">
        <title>Simultaneous high-throughput recombinational cloning of open reading frames in closed and open configurations.</title>
        <authorList>
            <person name="Underwood B.A."/>
            <person name="Vanderhaeghen R."/>
            <person name="Whitford R."/>
            <person name="Town C.D."/>
            <person name="Hilson P."/>
        </authorList>
    </citation>
    <scope>NUCLEOTIDE SEQUENCE [LARGE SCALE GENOMIC DNA]</scope>
    <source>
        <strain>cv. Columbia</strain>
    </source>
</reference>
<reference key="4">
    <citation type="journal article" date="2012" name="Science">
        <title>Egg cell-secreted EC1 triggers sperm cell activation during double fertilization.</title>
        <authorList>
            <person name="Sprunck S."/>
            <person name="Rademacher S."/>
            <person name="Vogler F."/>
            <person name="Gheyselinck J."/>
            <person name="Grossniklaus U."/>
            <person name="Dresselhaus T."/>
        </authorList>
    </citation>
    <scope>FUNCTION</scope>
    <scope>TISSUE SPECIFICITY</scope>
    <scope>DEVELOPMENTAL STAGE</scope>
    <scope>SUBCELLULAR LOCATION</scope>
</reference>
<dbReference type="EMBL" id="AC007019">
    <property type="protein sequence ID" value="AAD20394.1"/>
    <property type="molecule type" value="Genomic_DNA"/>
</dbReference>
<dbReference type="EMBL" id="CP002685">
    <property type="protein sequence ID" value="AEC07218.1"/>
    <property type="molecule type" value="Genomic_DNA"/>
</dbReference>
<dbReference type="EMBL" id="DQ446544">
    <property type="protein sequence ID" value="ABE65456.1"/>
    <property type="molecule type" value="Genomic_DNA"/>
</dbReference>
<dbReference type="EMBL" id="DQ653011">
    <property type="protein sequence ID" value="ABK28194.1"/>
    <property type="status" value="ALT_SEQ"/>
    <property type="molecule type" value="Genomic_DNA"/>
</dbReference>
<dbReference type="PIR" id="F84604">
    <property type="entry name" value="F84604"/>
</dbReference>
<dbReference type="RefSeq" id="NP_179766.1">
    <property type="nucleotide sequence ID" value="NM_127744.2"/>
</dbReference>
<dbReference type="STRING" id="3702.Q9SJ24"/>
<dbReference type="PaxDb" id="3702-AT2G21740.1"/>
<dbReference type="EnsemblPlants" id="AT2G21740.1">
    <property type="protein sequence ID" value="AT2G21740.1"/>
    <property type="gene ID" value="AT2G21740"/>
</dbReference>
<dbReference type="GeneID" id="816711"/>
<dbReference type="Gramene" id="AT2G21740.1">
    <property type="protein sequence ID" value="AT2G21740.1"/>
    <property type="gene ID" value="AT2G21740"/>
</dbReference>
<dbReference type="KEGG" id="ath:AT2G21740"/>
<dbReference type="Araport" id="AT2G21740"/>
<dbReference type="TAIR" id="AT2G21740">
    <property type="gene designation" value="EC1.2"/>
</dbReference>
<dbReference type="eggNOG" id="ENOG502S3PF">
    <property type="taxonomic scope" value="Eukaryota"/>
</dbReference>
<dbReference type="HOGENOM" id="CLU_128969_2_0_1"/>
<dbReference type="InParanoid" id="Q9SJ24"/>
<dbReference type="OMA" id="IERRCWA"/>
<dbReference type="OrthoDB" id="782765at2759"/>
<dbReference type="PhylomeDB" id="Q9SJ24"/>
<dbReference type="PRO" id="PR:Q9SJ24"/>
<dbReference type="Proteomes" id="UP000006548">
    <property type="component" value="Chromosome 2"/>
</dbReference>
<dbReference type="ExpressionAtlas" id="Q9SJ24">
    <property type="expression patterns" value="baseline and differential"/>
</dbReference>
<dbReference type="GO" id="GO:0031410">
    <property type="term" value="C:cytoplasmic vesicle"/>
    <property type="evidence" value="ECO:0007669"/>
    <property type="project" value="UniProtKB-KW"/>
</dbReference>
<dbReference type="GO" id="GO:0005576">
    <property type="term" value="C:extracellular region"/>
    <property type="evidence" value="ECO:0000314"/>
    <property type="project" value="UniProtKB"/>
</dbReference>
<dbReference type="GO" id="GO:0031982">
    <property type="term" value="C:vesicle"/>
    <property type="evidence" value="ECO:0000314"/>
    <property type="project" value="UniProtKB"/>
</dbReference>
<dbReference type="GO" id="GO:0009567">
    <property type="term" value="P:double fertilization forming a zygote and endosperm"/>
    <property type="evidence" value="ECO:0000316"/>
    <property type="project" value="TAIR"/>
</dbReference>
<dbReference type="GO" id="GO:0080155">
    <property type="term" value="P:regulation of double fertilization forming a zygote and endosperm"/>
    <property type="evidence" value="ECO:0000315"/>
    <property type="project" value="UniProtKB"/>
</dbReference>
<dbReference type="GO" id="GO:2000008">
    <property type="term" value="P:regulation of protein localization to cell surface"/>
    <property type="evidence" value="ECO:0000315"/>
    <property type="project" value="UniProtKB"/>
</dbReference>
<dbReference type="InterPro" id="IPR044711">
    <property type="entry name" value="EC11-15"/>
</dbReference>
<dbReference type="InterPro" id="IPR008502">
    <property type="entry name" value="Prolamin-like"/>
</dbReference>
<dbReference type="PANTHER" id="PTHR35293:SF10">
    <property type="entry name" value="EGG CELL-SECRETED PROTEIN 1.2-RELATED"/>
    <property type="match status" value="1"/>
</dbReference>
<dbReference type="PANTHER" id="PTHR35293">
    <property type="entry name" value="EGG CELL-SECRETED PROTEIN 1.5"/>
    <property type="match status" value="1"/>
</dbReference>
<dbReference type="Pfam" id="PF05617">
    <property type="entry name" value="Prolamin_like"/>
    <property type="match status" value="1"/>
</dbReference>
<keyword id="KW-0968">Cytoplasmic vesicle</keyword>
<keyword id="KW-0278">Fertilization</keyword>
<keyword id="KW-1185">Reference proteome</keyword>
<keyword id="KW-0964">Secreted</keyword>
<keyword id="KW-0732">Signal</keyword>
<protein>
    <recommendedName>
        <fullName>Egg cell-secreted protein 1.2</fullName>
    </recommendedName>
</protein>
<feature type="signal peptide" evidence="1">
    <location>
        <begin position="1"/>
        <end position="22"/>
    </location>
</feature>
<feature type="chain" id="PRO_0000421242" description="Egg cell-secreted protein 1.2">
    <location>
        <begin position="23"/>
        <end position="125"/>
    </location>
</feature>